<feature type="chain" id="PRO_0000376479" description="Probable cell division protein WhiA">
    <location>
        <begin position="1"/>
        <end position="317"/>
    </location>
</feature>
<feature type="DNA-binding region" description="H-T-H motif" evidence="1">
    <location>
        <begin position="275"/>
        <end position="308"/>
    </location>
</feature>
<keyword id="KW-0131">Cell cycle</keyword>
<keyword id="KW-0132">Cell division</keyword>
<keyword id="KW-0238">DNA-binding</keyword>
<keyword id="KW-1185">Reference proteome</keyword>
<name>WHIA_DESHY</name>
<accession>Q24MW0</accession>
<gene>
    <name evidence="1" type="primary">whiA</name>
    <name type="ordered locus">DSY4843</name>
</gene>
<reference key="1">
    <citation type="journal article" date="2006" name="J. Bacteriol.">
        <title>Complete genome sequence of the dehalorespiring bacterium Desulfitobacterium hafniense Y51 and comparison with Dehalococcoides ethenogenes 195.</title>
        <authorList>
            <person name="Nonaka H."/>
            <person name="Keresztes G."/>
            <person name="Shinoda Y."/>
            <person name="Ikenaga Y."/>
            <person name="Abe M."/>
            <person name="Naito K."/>
            <person name="Inatomi K."/>
            <person name="Furukawa K."/>
            <person name="Inui M."/>
            <person name="Yukawa H."/>
        </authorList>
    </citation>
    <scope>NUCLEOTIDE SEQUENCE [LARGE SCALE GENOMIC DNA]</scope>
    <source>
        <strain>Y51</strain>
    </source>
</reference>
<organism>
    <name type="scientific">Desulfitobacterium hafniense (strain Y51)</name>
    <dbReference type="NCBI Taxonomy" id="138119"/>
    <lineage>
        <taxon>Bacteria</taxon>
        <taxon>Bacillati</taxon>
        <taxon>Bacillota</taxon>
        <taxon>Clostridia</taxon>
        <taxon>Eubacteriales</taxon>
        <taxon>Desulfitobacteriaceae</taxon>
        <taxon>Desulfitobacterium</taxon>
    </lineage>
</organism>
<evidence type="ECO:0000255" key="1">
    <source>
        <dbReference type="HAMAP-Rule" id="MF_01420"/>
    </source>
</evidence>
<dbReference type="EMBL" id="AP008230">
    <property type="protein sequence ID" value="BAE86632.1"/>
    <property type="molecule type" value="Genomic_DNA"/>
</dbReference>
<dbReference type="RefSeq" id="WP_011462177.1">
    <property type="nucleotide sequence ID" value="NC_007907.1"/>
</dbReference>
<dbReference type="SMR" id="Q24MW0"/>
<dbReference type="STRING" id="138119.DSY4843"/>
<dbReference type="KEGG" id="dsy:DSY4843"/>
<dbReference type="eggNOG" id="COG1481">
    <property type="taxonomic scope" value="Bacteria"/>
</dbReference>
<dbReference type="HOGENOM" id="CLU_053282_0_0_9"/>
<dbReference type="Proteomes" id="UP000001946">
    <property type="component" value="Chromosome"/>
</dbReference>
<dbReference type="GO" id="GO:0003677">
    <property type="term" value="F:DNA binding"/>
    <property type="evidence" value="ECO:0007669"/>
    <property type="project" value="UniProtKB-UniRule"/>
</dbReference>
<dbReference type="GO" id="GO:0051301">
    <property type="term" value="P:cell division"/>
    <property type="evidence" value="ECO:0007669"/>
    <property type="project" value="UniProtKB-UniRule"/>
</dbReference>
<dbReference type="GO" id="GO:0043937">
    <property type="term" value="P:regulation of sporulation"/>
    <property type="evidence" value="ECO:0007669"/>
    <property type="project" value="InterPro"/>
</dbReference>
<dbReference type="Gene3D" id="3.10.28.10">
    <property type="entry name" value="Homing endonucleases"/>
    <property type="match status" value="1"/>
</dbReference>
<dbReference type="HAMAP" id="MF_01420">
    <property type="entry name" value="HTH_type_WhiA"/>
    <property type="match status" value="1"/>
</dbReference>
<dbReference type="InterPro" id="IPR027434">
    <property type="entry name" value="Homing_endonucl"/>
</dbReference>
<dbReference type="InterPro" id="IPR018478">
    <property type="entry name" value="Sporu_reg_WhiA_N_dom"/>
</dbReference>
<dbReference type="InterPro" id="IPR003802">
    <property type="entry name" value="Sporulation_regulator_WhiA"/>
</dbReference>
<dbReference type="InterPro" id="IPR023054">
    <property type="entry name" value="Sporulation_regulator_WhiA_C"/>
</dbReference>
<dbReference type="InterPro" id="IPR039518">
    <property type="entry name" value="WhiA_LAGLIDADG_dom"/>
</dbReference>
<dbReference type="NCBIfam" id="TIGR00647">
    <property type="entry name" value="DNA_bind_WhiA"/>
    <property type="match status" value="1"/>
</dbReference>
<dbReference type="PANTHER" id="PTHR37307">
    <property type="entry name" value="CELL DIVISION PROTEIN WHIA-RELATED"/>
    <property type="match status" value="1"/>
</dbReference>
<dbReference type="PANTHER" id="PTHR37307:SF1">
    <property type="entry name" value="CELL DIVISION PROTEIN WHIA-RELATED"/>
    <property type="match status" value="1"/>
</dbReference>
<dbReference type="Pfam" id="PF02650">
    <property type="entry name" value="HTH_WhiA"/>
    <property type="match status" value="1"/>
</dbReference>
<dbReference type="Pfam" id="PF14527">
    <property type="entry name" value="LAGLIDADG_WhiA"/>
    <property type="match status" value="1"/>
</dbReference>
<dbReference type="Pfam" id="PF10298">
    <property type="entry name" value="WhiA_N"/>
    <property type="match status" value="1"/>
</dbReference>
<dbReference type="SUPFAM" id="SSF55608">
    <property type="entry name" value="Homing endonucleases"/>
    <property type="match status" value="1"/>
</dbReference>
<proteinExistence type="inferred from homology"/>
<sequence length="317" mass="35765">MSFSAETKDELARIEEGKRCCNLAELAALVRMDGTLQIANHSYALNVITESAPVARKVYRLAKNLLGLPVDIMVRRKLRLKKNNSYMVKIYPRTLEDLQQLGLLDEEGEILPGIPNVLVKKKCDRIAYLRGAFLAGGSINNPEGTYHLEIITNDSLHAEALSKLLNKFHLGAKVSMRKSWHVVYIKESEHIVEFLGFIGAHRALLEFENVRVLKDMRNQVNRLVNCETANLNKTVDAAVRQVENIQRVANTIGLQALPEPLREIAELRLEYPDASLKELGEMLVPKVGKSGVNHRMRKIDELAEKLEEQSKRVRKGG</sequence>
<protein>
    <recommendedName>
        <fullName evidence="1">Probable cell division protein WhiA</fullName>
    </recommendedName>
</protein>
<comment type="function">
    <text evidence="1">Involved in cell division and chromosome segregation.</text>
</comment>
<comment type="similarity">
    <text evidence="1">Belongs to the WhiA family.</text>
</comment>